<accession>P67095</accession>
<accession>P76495</accession>
<accession>Q2MAL9</accession>
<name>YFCE_ECOLI</name>
<dbReference type="EC" id="3.1.4.-" evidence="5 6 7"/>
<dbReference type="EMBL" id="U00096">
    <property type="protein sequence ID" value="AAC75360.1"/>
    <property type="molecule type" value="Genomic_DNA"/>
</dbReference>
<dbReference type="EMBL" id="AP009048">
    <property type="protein sequence ID" value="BAE76687.1"/>
    <property type="molecule type" value="Genomic_DNA"/>
</dbReference>
<dbReference type="PIR" id="B65002">
    <property type="entry name" value="B65002"/>
</dbReference>
<dbReference type="RefSeq" id="NP_416803.3">
    <property type="nucleotide sequence ID" value="NC_000913.3"/>
</dbReference>
<dbReference type="PDB" id="1SU1">
    <property type="method" value="X-ray"/>
    <property type="resolution" value="2.25 A"/>
    <property type="chains" value="A/B/C/D=1-184"/>
</dbReference>
<dbReference type="PDBsum" id="1SU1"/>
<dbReference type="SMR" id="P67095"/>
<dbReference type="BioGRID" id="4260515">
    <property type="interactions" value="362"/>
</dbReference>
<dbReference type="FunCoup" id="P67095">
    <property type="interactions" value="75"/>
</dbReference>
<dbReference type="STRING" id="511145.b2300"/>
<dbReference type="jPOST" id="P67095"/>
<dbReference type="PaxDb" id="511145-b2300"/>
<dbReference type="EnsemblBacteria" id="AAC75360">
    <property type="protein sequence ID" value="AAC75360"/>
    <property type="gene ID" value="b2300"/>
</dbReference>
<dbReference type="GeneID" id="946755"/>
<dbReference type="KEGG" id="ecj:JW5377"/>
<dbReference type="KEGG" id="eco:b2300"/>
<dbReference type="PATRIC" id="fig|511145.12.peg.2395"/>
<dbReference type="EchoBASE" id="EB3861"/>
<dbReference type="eggNOG" id="COG0622">
    <property type="taxonomic scope" value="Bacteria"/>
</dbReference>
<dbReference type="HOGENOM" id="CLU_063749_1_1_6"/>
<dbReference type="InParanoid" id="P67095"/>
<dbReference type="OMA" id="MKLFFAS"/>
<dbReference type="PhylomeDB" id="P67095"/>
<dbReference type="BioCyc" id="EcoCyc:G7192-MONOMER"/>
<dbReference type="BRENDA" id="3.1.4.1">
    <property type="organism ID" value="2026"/>
</dbReference>
<dbReference type="BRENDA" id="3.1.4.16">
    <property type="organism ID" value="2026"/>
</dbReference>
<dbReference type="EvolutionaryTrace" id="P67095"/>
<dbReference type="PRO" id="PR:P67095"/>
<dbReference type="Proteomes" id="UP000000625">
    <property type="component" value="Chromosome"/>
</dbReference>
<dbReference type="GO" id="GO:0005829">
    <property type="term" value="C:cytosol"/>
    <property type="evidence" value="ECO:0000314"/>
    <property type="project" value="EcoCyc"/>
</dbReference>
<dbReference type="GO" id="GO:0032991">
    <property type="term" value="C:protein-containing complex"/>
    <property type="evidence" value="ECO:0000314"/>
    <property type="project" value="EcoCyc"/>
</dbReference>
<dbReference type="GO" id="GO:0042802">
    <property type="term" value="F:identical protein binding"/>
    <property type="evidence" value="ECO:0000314"/>
    <property type="project" value="EcoCyc"/>
</dbReference>
<dbReference type="GO" id="GO:0030145">
    <property type="term" value="F:manganese ion binding"/>
    <property type="evidence" value="ECO:0000314"/>
    <property type="project" value="EcoCyc"/>
</dbReference>
<dbReference type="GO" id="GO:0008081">
    <property type="term" value="F:phosphoric diester hydrolase activity"/>
    <property type="evidence" value="ECO:0000314"/>
    <property type="project" value="EcoCyc"/>
</dbReference>
<dbReference type="CDD" id="cd00841">
    <property type="entry name" value="MPP_YfcE"/>
    <property type="match status" value="1"/>
</dbReference>
<dbReference type="FunFam" id="3.60.21.10:FF:000018">
    <property type="entry name" value="Phosphoesterase"/>
    <property type="match status" value="1"/>
</dbReference>
<dbReference type="Gene3D" id="3.60.21.10">
    <property type="match status" value="1"/>
</dbReference>
<dbReference type="InterPro" id="IPR024654">
    <property type="entry name" value="Calcineurin-like_PHP_lpxH"/>
</dbReference>
<dbReference type="InterPro" id="IPR029052">
    <property type="entry name" value="Metallo-depent_PP-like"/>
</dbReference>
<dbReference type="InterPro" id="IPR041802">
    <property type="entry name" value="MPP_YfcE"/>
</dbReference>
<dbReference type="InterPro" id="IPR020935">
    <property type="entry name" value="PdiEstase_YfcE_CS"/>
</dbReference>
<dbReference type="InterPro" id="IPR000979">
    <property type="entry name" value="Phosphodiesterase_MJ0936/Vps29"/>
</dbReference>
<dbReference type="NCBIfam" id="NF006988">
    <property type="entry name" value="PRK09453.1"/>
    <property type="match status" value="1"/>
</dbReference>
<dbReference type="NCBIfam" id="TIGR00040">
    <property type="entry name" value="yfcE"/>
    <property type="match status" value="1"/>
</dbReference>
<dbReference type="PANTHER" id="PTHR11124">
    <property type="entry name" value="VACUOLAR SORTING PROTEIN VPS29"/>
    <property type="match status" value="1"/>
</dbReference>
<dbReference type="Pfam" id="PF12850">
    <property type="entry name" value="Metallophos_2"/>
    <property type="match status" value="1"/>
</dbReference>
<dbReference type="SUPFAM" id="SSF56300">
    <property type="entry name" value="Metallo-dependent phosphatases"/>
    <property type="match status" value="1"/>
</dbReference>
<dbReference type="PROSITE" id="PS01269">
    <property type="entry name" value="UPF0025"/>
    <property type="match status" value="1"/>
</dbReference>
<protein>
    <recommendedName>
        <fullName evidence="4">Phosphodiesterase YfcE</fullName>
        <ecNumber evidence="5 6 7">3.1.4.-</ecNumber>
    </recommendedName>
</protein>
<reference key="1">
    <citation type="journal article" date="1997" name="Science">
        <title>The complete genome sequence of Escherichia coli K-12.</title>
        <authorList>
            <person name="Blattner F.R."/>
            <person name="Plunkett G. III"/>
            <person name="Bloch C.A."/>
            <person name="Perna N.T."/>
            <person name="Burland V."/>
            <person name="Riley M."/>
            <person name="Collado-Vides J."/>
            <person name="Glasner J.D."/>
            <person name="Rode C.K."/>
            <person name="Mayhew G.F."/>
            <person name="Gregor J."/>
            <person name="Davis N.W."/>
            <person name="Kirkpatrick H.A."/>
            <person name="Goeden M.A."/>
            <person name="Rose D.J."/>
            <person name="Mau B."/>
            <person name="Shao Y."/>
        </authorList>
    </citation>
    <scope>NUCLEOTIDE SEQUENCE [LARGE SCALE GENOMIC DNA]</scope>
    <source>
        <strain>K12 / MG1655 / ATCC 47076</strain>
    </source>
</reference>
<reference key="2">
    <citation type="journal article" date="2006" name="Mol. Syst. Biol.">
        <title>Highly accurate genome sequences of Escherichia coli K-12 strains MG1655 and W3110.</title>
        <authorList>
            <person name="Hayashi K."/>
            <person name="Morooka N."/>
            <person name="Yamamoto Y."/>
            <person name="Fujita K."/>
            <person name="Isono K."/>
            <person name="Choi S."/>
            <person name="Ohtsubo E."/>
            <person name="Baba T."/>
            <person name="Wanner B.L."/>
            <person name="Mori H."/>
            <person name="Horiuchi T."/>
        </authorList>
    </citation>
    <scope>NUCLEOTIDE SEQUENCE [LARGE SCALE GENOMIC DNA]</scope>
    <source>
        <strain>K12 / W3110 / ATCC 27325 / DSM 5911</strain>
    </source>
</reference>
<reference key="3">
    <citation type="journal article" date="2005" name="FEMS Microbiol. Rev.">
        <title>Enzyme genomics: application of general enzymatic screens to discover new enzymes.</title>
        <authorList>
            <person name="Kuznetsova E."/>
            <person name="Proudfoot M."/>
            <person name="Sanders S.A."/>
            <person name="Reinking J."/>
            <person name="Savchenko A."/>
            <person name="Arrowsmith C.H."/>
            <person name="Edwards A.M."/>
            <person name="Yakunin A.F."/>
        </authorList>
    </citation>
    <scope>FUNCTION AS A PHOSPHODIESTERASE</scope>
    <scope>COFACTOR</scope>
</reference>
<reference key="4">
    <citation type="journal article" date="2008" name="J. Biol. Chem.">
        <title>A phosphate-binding histidine of binuclear metallophosphodiesterase enzymes is a determinant of 2',3'-cyclic nucleotide phosphodiesterase activity.</title>
        <authorList>
            <person name="Keppetipola N."/>
            <person name="Shuman S."/>
        </authorList>
    </citation>
    <scope>FUNCTION AS A PHOSPHODIESTERASE</scope>
    <scope>BIOPHYSICOCHEMICAL PROPERTIES</scope>
    <scope>MUTAGENESIS OF CYS-74</scope>
</reference>
<reference evidence="8" key="5">
    <citation type="journal article" date="2007" name="Protein Sci.">
        <title>Structural and biochemical characterization of a novel Mn2+-dependent phosphodiesterase encoded by the yfcE gene.</title>
        <authorList>
            <person name="Miller D.J."/>
            <person name="Shuvalova L."/>
            <person name="Evdokimova E."/>
            <person name="Savchenko A."/>
            <person name="Yakunin A.F."/>
            <person name="Anderson W.F."/>
        </authorList>
    </citation>
    <scope>X-RAY CRYSTALLOGRAPHY (2.25 ANGSTROMS) IN COMPLEX WITH ZN(2+)</scope>
    <scope>FUNCTION AS A PHOSPHODIESTERASE</scope>
    <scope>COFACTOR</scope>
    <scope>ACTIVITY REGULATION</scope>
    <scope>BIOPHYSICOCHEMICAL PROPERTIES</scope>
    <scope>SUBUNIT</scope>
</reference>
<comment type="function">
    <text evidence="1 2 3">Shows phosphodiesterase activity (PubMed:15808744, PubMed:17586769, PubMed:18757371). Shows significant activity toward bis-p-nitrophenyl phosphate (bis-pNPP), an artificial substrate commonly used to detect phosphodiesterase activity (PubMed:15808744, PubMed:17586769, PubMed:18757371). Also hydrolyzes, with lower efficiency, two other artificial phosphodiesterase substrates, thymidine 5'-monophosphate p-nitrophenyl ester (pNP-TMP) and p-nitrophenylphosphorylcholine (pNPPC) (PubMed:15808744, PubMed:17586769). Shows phosphomonoesterase activity toward p-nitrophenyl phosphate (pNPP), with much lower catalytic efficiency (PubMed:18757371). No activity was detected against a wide variety of naturally occurring phosphomonoesters and phosphodiesters, including various 2',3'- and 3',5'-cyclic nucleotides, suggesting that YfcE is highly specific for its physiological substrate, which is not yet known (PubMed:17586769).</text>
</comment>
<comment type="cofactor">
    <cofactor evidence="1 2">
        <name>Mn(2+)</name>
        <dbReference type="ChEBI" id="CHEBI:29035"/>
    </cofactor>
    <text evidence="2 6">Binds 2 manganese ions per subunit (Probable). Phosphodiesterase activity is 25-fold lower with Co(2+), whereas other metals do not support the activity (PubMed:17586769).</text>
</comment>
<comment type="activity regulation">
    <text evidence="2">Hydrolysis of bis-pNPP is significantly inhibited by sulfate and phosphate, which may mimic binding of a natural ligand.</text>
</comment>
<comment type="biophysicochemical properties">
    <kinetics>
        <KM evidence="2">9.74 mM for bis-pNPP</KM>
        <KM evidence="3">4.8 mM for bis-pNPP</KM>
        <KM evidence="2">18.3 mM for bis-pNPP (in the presence of 0.5 mM phosphate)</KM>
        <KM evidence="3">10.6 mM for pNPP</KM>
        <KM evidence="2">0.022 mM for Mn(2+)</KM>
        <Vmax evidence="2">52.4 umol/min/mg enzyme with bis-pNPP as substrate</Vmax>
        <Vmax evidence="2">53.49 umol/min/mg enzyme with bis-pNPP as substrate (in the presence of 0.5 mM phosphate)</Vmax>
        <text evidence="2 3">kcat is 19.8 sec(-1) with bis-pNPP as substrate (PubMed:17586769). kcat is 18 sec(-1) with bis-pNPP as substrate (PubMed:18757371). kcat is 20.3 sec(-1) with bis-pNPP as substrate (in the presence of 0.5 mM phosphate) (PubMed:17586769). kcat is 0.9 sec(-1) with pNPP as substrate (PubMed:18757371).</text>
    </kinetics>
    <phDependence>
        <text evidence="2">Optimum pH is 8.5-9.8 with bis-pNPP as substrate.</text>
    </phDependence>
</comment>
<comment type="subunit">
    <text evidence="2">Homotetramer.</text>
</comment>
<comment type="similarity">
    <text evidence="4">Belongs to the metallophosphoesterase superfamily. YfcE family.</text>
</comment>
<feature type="chain" id="PRO_0000155605" description="Phosphodiesterase YfcE">
    <location>
        <begin position="1"/>
        <end position="184"/>
    </location>
</feature>
<feature type="binding site" evidence="6 8">
    <location>
        <position position="9"/>
    </location>
    <ligand>
        <name>Mn(2+)</name>
        <dbReference type="ChEBI" id="CHEBI:29035"/>
        <label>1</label>
    </ligand>
</feature>
<feature type="binding site" evidence="6 8">
    <location>
        <position position="11"/>
    </location>
    <ligand>
        <name>Mn(2+)</name>
        <dbReference type="ChEBI" id="CHEBI:29035"/>
        <label>1</label>
    </ligand>
</feature>
<feature type="binding site" evidence="6 8">
    <location>
        <position position="37"/>
    </location>
    <ligand>
        <name>Mn(2+)</name>
        <dbReference type="ChEBI" id="CHEBI:29035"/>
        <label>1</label>
    </ligand>
</feature>
<feature type="binding site" evidence="6 8">
    <location>
        <position position="37"/>
    </location>
    <ligand>
        <name>Mn(2+)</name>
        <dbReference type="ChEBI" id="CHEBI:29035"/>
        <label>2</label>
    </ligand>
</feature>
<feature type="binding site" evidence="6 8">
    <location>
        <position position="73"/>
    </location>
    <ligand>
        <name>Mn(2+)</name>
        <dbReference type="ChEBI" id="CHEBI:29035"/>
        <label>2</label>
    </ligand>
</feature>
<feature type="binding site" evidence="6 8">
    <location>
        <position position="105"/>
    </location>
    <ligand>
        <name>Mn(2+)</name>
        <dbReference type="ChEBI" id="CHEBI:29035"/>
        <label>2</label>
    </ligand>
</feature>
<feature type="binding site" evidence="6 8">
    <location>
        <position position="127"/>
    </location>
    <ligand>
        <name>Mn(2+)</name>
        <dbReference type="ChEBI" id="CHEBI:29035"/>
        <label>2</label>
    </ligand>
</feature>
<feature type="binding site" evidence="6 8">
    <location>
        <position position="129"/>
    </location>
    <ligand>
        <name>Mn(2+)</name>
        <dbReference type="ChEBI" id="CHEBI:29035"/>
        <label>1</label>
    </ligand>
</feature>
<feature type="mutagenesis site" description="Decreases specific activity with bis-pNPP but does not affect specific activity with pNPP." evidence="3">
    <original>C</original>
    <variation>A</variation>
    <location>
        <position position="74"/>
    </location>
</feature>
<feature type="mutagenesis site" description="Increases specific activity with bis-pNPP and pNPP. Confers a gain of function and converts the enzyme into a an active 2',3'-cNMP phosphodiesterase." evidence="3">
    <original>C</original>
    <variation>H</variation>
    <location>
        <position position="74"/>
    </location>
</feature>
<feature type="mutagenesis site" description="Increases specific activity with bis-pNPP and pNPP." evidence="3">
    <original>C</original>
    <variation>N</variation>
    <location>
        <position position="74"/>
    </location>
</feature>
<feature type="strand" evidence="9">
    <location>
        <begin position="3"/>
        <end position="7"/>
    </location>
</feature>
<feature type="helix" evidence="9">
    <location>
        <begin position="14"/>
        <end position="27"/>
    </location>
</feature>
<feature type="strand" evidence="9">
    <location>
        <begin position="30"/>
        <end position="34"/>
    </location>
</feature>
<feature type="helix" evidence="9">
    <location>
        <begin position="53"/>
        <end position="61"/>
    </location>
</feature>
<feature type="helix" evidence="9">
    <location>
        <begin position="62"/>
        <end position="66"/>
    </location>
</feature>
<feature type="strand" evidence="9">
    <location>
        <begin position="67"/>
        <end position="69"/>
    </location>
</feature>
<feature type="helix" evidence="9">
    <location>
        <begin position="77"/>
        <end position="82"/>
    </location>
</feature>
<feature type="strand" evidence="9">
    <location>
        <begin position="83"/>
        <end position="85"/>
    </location>
</feature>
<feature type="strand" evidence="9">
    <location>
        <begin position="90"/>
        <end position="95"/>
    </location>
</feature>
<feature type="strand" evidence="9">
    <location>
        <begin position="100"/>
        <end position="104"/>
    </location>
</feature>
<feature type="strand" evidence="9">
    <location>
        <begin position="106"/>
        <end position="110"/>
    </location>
</feature>
<feature type="strand" evidence="9">
    <location>
        <begin position="122"/>
        <end position="124"/>
    </location>
</feature>
<feature type="strand" evidence="9">
    <location>
        <begin position="132"/>
        <end position="136"/>
    </location>
</feature>
<feature type="strand" evidence="9">
    <location>
        <begin position="139"/>
        <end position="143"/>
    </location>
</feature>
<feature type="strand" evidence="9">
    <location>
        <begin position="157"/>
        <end position="162"/>
    </location>
</feature>
<feature type="strand" evidence="9">
    <location>
        <begin position="165"/>
        <end position="170"/>
    </location>
</feature>
<feature type="turn" evidence="9">
    <location>
        <begin position="171"/>
        <end position="173"/>
    </location>
</feature>
<feature type="strand" evidence="9">
    <location>
        <begin position="176"/>
        <end position="181"/>
    </location>
</feature>
<organism>
    <name type="scientific">Escherichia coli (strain K12)</name>
    <dbReference type="NCBI Taxonomy" id="83333"/>
    <lineage>
        <taxon>Bacteria</taxon>
        <taxon>Pseudomonadati</taxon>
        <taxon>Pseudomonadota</taxon>
        <taxon>Gammaproteobacteria</taxon>
        <taxon>Enterobacterales</taxon>
        <taxon>Enterobacteriaceae</taxon>
        <taxon>Escherichia</taxon>
    </lineage>
</organism>
<proteinExistence type="evidence at protein level"/>
<evidence type="ECO:0000269" key="1">
    <source>
    </source>
</evidence>
<evidence type="ECO:0000269" key="2">
    <source>
    </source>
</evidence>
<evidence type="ECO:0000269" key="3">
    <source>
    </source>
</evidence>
<evidence type="ECO:0000305" key="4"/>
<evidence type="ECO:0000305" key="5">
    <source>
    </source>
</evidence>
<evidence type="ECO:0000305" key="6">
    <source>
    </source>
</evidence>
<evidence type="ECO:0000305" key="7">
    <source>
    </source>
</evidence>
<evidence type="ECO:0007744" key="8">
    <source>
        <dbReference type="PDB" id="1SU1"/>
    </source>
</evidence>
<evidence type="ECO:0007829" key="9">
    <source>
        <dbReference type="PDB" id="1SU1"/>
    </source>
</evidence>
<keyword id="KW-0002">3D-structure</keyword>
<keyword id="KW-0378">Hydrolase</keyword>
<keyword id="KW-0464">Manganese</keyword>
<keyword id="KW-0479">Metal-binding</keyword>
<keyword id="KW-1185">Reference proteome</keyword>
<gene>
    <name type="primary">yfcE</name>
    <name type="ordered locus">b2300</name>
    <name type="ordered locus">JW5377</name>
</gene>
<sequence length="184" mass="20122">MMKLMFASDIHGSLPATERVLELFAQSGAQWLVILGDVLNHGPRNALPEGYAPAKVAERLNEVAHKVIAVRGNCDSEVDQMLLHFPITAPWQQVLLEKQRLFLTHGHLFGPENLPALNQNDVLVYGHTHLPVAEQRGEIFHFNPGSVSIPKGGNPASYGMLDNDVLSVIALNDQSIIAQVAINP</sequence>